<sequence>MGCTRDAILDALENLTADELKKFKMKLLSVPLREGYGRIPRGTLLPLDAVDLTDKLVSYYLEAYGAELTALVLRDMGMQEVAEQLQETMSKGPRNVLAEVRDPLQKTAKPGLHFVDQHRAALIARVTVVDGVLDALYGKVLTEEQYQAVRAERTSSDKMRKLFSFSPAWNMTCKDLLLQALRDTQPYLVDDLEQS</sequence>
<accession>Q8HXK9</accession>
<keyword id="KW-0053">Apoptosis</keyword>
<keyword id="KW-0963">Cytoplasm</keyword>
<keyword id="KW-0256">Endoplasmic reticulum</keyword>
<keyword id="KW-0391">Immunity</keyword>
<keyword id="KW-1271">Inflammasome</keyword>
<keyword id="KW-0395">Inflammatory response</keyword>
<keyword id="KW-0399">Innate immunity</keyword>
<keyword id="KW-1017">Isopeptide bond</keyword>
<keyword id="KW-0496">Mitochondrion</keyword>
<keyword id="KW-0539">Nucleus</keyword>
<keyword id="KW-0597">Phosphoprotein</keyword>
<keyword id="KW-1185">Reference proteome</keyword>
<keyword id="KW-0043">Tumor suppressor</keyword>
<keyword id="KW-0832">Ubl conjugation</keyword>
<protein>
    <recommendedName>
        <fullName>Apoptosis-associated speck-like protein containing a CARD</fullName>
    </recommendedName>
    <alternativeName>
        <fullName>PYD and CARD domain-containing protein</fullName>
    </alternativeName>
</protein>
<gene>
    <name type="primary">PYCARD</name>
    <name type="synonym">ASC</name>
</gene>
<proteinExistence type="evidence at transcript level"/>
<organism>
    <name type="scientific">Bos taurus</name>
    <name type="common">Bovine</name>
    <dbReference type="NCBI Taxonomy" id="9913"/>
    <lineage>
        <taxon>Eukaryota</taxon>
        <taxon>Metazoa</taxon>
        <taxon>Chordata</taxon>
        <taxon>Craniata</taxon>
        <taxon>Vertebrata</taxon>
        <taxon>Euteleostomi</taxon>
        <taxon>Mammalia</taxon>
        <taxon>Eutheria</taxon>
        <taxon>Laurasiatheria</taxon>
        <taxon>Artiodactyla</taxon>
        <taxon>Ruminantia</taxon>
        <taxon>Pecora</taxon>
        <taxon>Bovidae</taxon>
        <taxon>Bovinae</taxon>
        <taxon>Bos</taxon>
    </lineage>
</organism>
<feature type="chain" id="PRO_0000245585" description="Apoptosis-associated speck-like protein containing a CARD">
    <location>
        <begin position="1"/>
        <end position="195"/>
    </location>
</feature>
<feature type="domain" description="Pyrin" evidence="4">
    <location>
        <begin position="1"/>
        <end position="91"/>
    </location>
</feature>
<feature type="domain" description="CARD" evidence="3">
    <location>
        <begin position="107"/>
        <end position="195"/>
    </location>
</feature>
<feature type="modified residue" description="Phosphoserine" evidence="1">
    <location>
        <position position="195"/>
    </location>
</feature>
<feature type="cross-link" description="Glycyl lysine isopeptide (Lys-Gly) (interchain with G-Cter in ubiquitin)" evidence="2">
    <location>
        <position position="55"/>
    </location>
</feature>
<feature type="cross-link" description="Glycyl lysine isopeptide (Lys-Gly) (interchain with G-Cter in ubiquitin)" evidence="2">
    <location>
        <position position="174"/>
    </location>
</feature>
<evidence type="ECO:0000250" key="1">
    <source>
        <dbReference type="UniProtKB" id="Q9EPB4"/>
    </source>
</evidence>
<evidence type="ECO:0000250" key="2">
    <source>
        <dbReference type="UniProtKB" id="Q9ULZ3"/>
    </source>
</evidence>
<evidence type="ECO:0000255" key="3">
    <source>
        <dbReference type="PROSITE-ProRule" id="PRU00046"/>
    </source>
</evidence>
<evidence type="ECO:0000255" key="4">
    <source>
        <dbReference type="PROSITE-ProRule" id="PRU00061"/>
    </source>
</evidence>
<reference key="1">
    <citation type="submission" date="2000-10" db="EMBL/GenBank/DDBJ databases">
        <authorList>
            <person name="Masumoto J."/>
            <person name="Sagara J."/>
            <person name="Taniguchi S."/>
        </authorList>
    </citation>
    <scope>NUCLEOTIDE SEQUENCE [MRNA]</scope>
</reference>
<reference key="2">
    <citation type="submission" date="2005-08" db="EMBL/GenBank/DDBJ databases">
        <authorList>
            <consortium name="NIH - Mammalian Gene Collection (MGC) project"/>
        </authorList>
    </citation>
    <scope>NUCLEOTIDE SEQUENCE [LARGE SCALE MRNA]</scope>
    <source>
        <strain>Crossbred X Angus</strain>
        <tissue>Ileum</tissue>
    </source>
</reference>
<dbReference type="EMBL" id="AB050006">
    <property type="protein sequence ID" value="BAC43753.1"/>
    <property type="molecule type" value="mRNA"/>
</dbReference>
<dbReference type="EMBL" id="BC102385">
    <property type="protein sequence ID" value="AAI02386.1"/>
    <property type="molecule type" value="mRNA"/>
</dbReference>
<dbReference type="RefSeq" id="NP_777155.1">
    <property type="nucleotide sequence ID" value="NM_174730.2"/>
</dbReference>
<dbReference type="SMR" id="Q8HXK9"/>
<dbReference type="FunCoup" id="Q8HXK9">
    <property type="interactions" value="610"/>
</dbReference>
<dbReference type="STRING" id="9913.ENSBTAP00000027359"/>
<dbReference type="PaxDb" id="9913-ENSBTAP00000027359"/>
<dbReference type="PeptideAtlas" id="Q8HXK9"/>
<dbReference type="GeneID" id="282846"/>
<dbReference type="KEGG" id="bta:282846"/>
<dbReference type="CTD" id="29108"/>
<dbReference type="eggNOG" id="ENOG502S3G5">
    <property type="taxonomic scope" value="Eukaryota"/>
</dbReference>
<dbReference type="InParanoid" id="Q8HXK9"/>
<dbReference type="OrthoDB" id="10058437at2759"/>
<dbReference type="Proteomes" id="UP000009136">
    <property type="component" value="Unplaced"/>
</dbReference>
<dbReference type="GO" id="GO:0097169">
    <property type="term" value="C:AIM2 inflammasome complex"/>
    <property type="evidence" value="ECO:0000250"/>
    <property type="project" value="UniProtKB"/>
</dbReference>
<dbReference type="GO" id="GO:0005737">
    <property type="term" value="C:cytoplasm"/>
    <property type="evidence" value="ECO:0000250"/>
    <property type="project" value="HGNC-UCL"/>
</dbReference>
<dbReference type="GO" id="GO:0005783">
    <property type="term" value="C:endoplasmic reticulum"/>
    <property type="evidence" value="ECO:0007669"/>
    <property type="project" value="UniProtKB-SubCell"/>
</dbReference>
<dbReference type="GO" id="GO:0005739">
    <property type="term" value="C:mitochondrion"/>
    <property type="evidence" value="ECO:0007669"/>
    <property type="project" value="UniProtKB-SubCell"/>
</dbReference>
<dbReference type="GO" id="GO:0072559">
    <property type="term" value="C:NLRP3 inflammasome complex"/>
    <property type="evidence" value="ECO:0000250"/>
    <property type="project" value="UniProtKB"/>
</dbReference>
<dbReference type="GO" id="GO:0140738">
    <property type="term" value="C:NLRP6 inflammasome complex"/>
    <property type="evidence" value="ECO:0000250"/>
    <property type="project" value="UniProtKB"/>
</dbReference>
<dbReference type="GO" id="GO:0005634">
    <property type="term" value="C:nucleus"/>
    <property type="evidence" value="ECO:0000250"/>
    <property type="project" value="UniProtKB"/>
</dbReference>
<dbReference type="GO" id="GO:0140608">
    <property type="term" value="F:cysteine-type endopeptidase activator activity"/>
    <property type="evidence" value="ECO:0000318"/>
    <property type="project" value="GO_Central"/>
</dbReference>
<dbReference type="GO" id="GO:0038187">
    <property type="term" value="F:pattern recognition receptor activity"/>
    <property type="evidence" value="ECO:0000318"/>
    <property type="project" value="GO_Central"/>
</dbReference>
<dbReference type="GO" id="GO:0046983">
    <property type="term" value="F:protein dimerization activity"/>
    <property type="evidence" value="ECO:0000250"/>
    <property type="project" value="UniProtKB"/>
</dbReference>
<dbReference type="GO" id="GO:0042803">
    <property type="term" value="F:protein homodimerization activity"/>
    <property type="evidence" value="ECO:0000250"/>
    <property type="project" value="HGNC-UCL"/>
</dbReference>
<dbReference type="GO" id="GO:0032090">
    <property type="term" value="F:Pyrin domain binding"/>
    <property type="evidence" value="ECO:0000250"/>
    <property type="project" value="HGNC-UCL"/>
</dbReference>
<dbReference type="GO" id="GO:0002218">
    <property type="term" value="P:activation of innate immune response"/>
    <property type="evidence" value="ECO:0000318"/>
    <property type="project" value="GO_Central"/>
</dbReference>
<dbReference type="GO" id="GO:0006954">
    <property type="term" value="P:inflammatory response"/>
    <property type="evidence" value="ECO:0000318"/>
    <property type="project" value="GO_Central"/>
</dbReference>
<dbReference type="GO" id="GO:0045087">
    <property type="term" value="P:innate immune response"/>
    <property type="evidence" value="ECO:0007669"/>
    <property type="project" value="UniProtKB-KW"/>
</dbReference>
<dbReference type="GO" id="GO:0097193">
    <property type="term" value="P:intrinsic apoptotic signaling pathway"/>
    <property type="evidence" value="ECO:0000318"/>
    <property type="project" value="GO_Central"/>
</dbReference>
<dbReference type="GO" id="GO:0044351">
    <property type="term" value="P:macropinocytosis"/>
    <property type="evidence" value="ECO:0000250"/>
    <property type="project" value="UniProtKB"/>
</dbReference>
<dbReference type="GO" id="GO:0002277">
    <property type="term" value="P:myeloid dendritic cell activation involved in immune response"/>
    <property type="evidence" value="ECO:0000250"/>
    <property type="project" value="UniProtKB"/>
</dbReference>
<dbReference type="GO" id="GO:1900016">
    <property type="term" value="P:negative regulation of cytokine production involved in inflammatory response"/>
    <property type="evidence" value="ECO:0000250"/>
    <property type="project" value="UniProtKB"/>
</dbReference>
<dbReference type="GO" id="GO:0030838">
    <property type="term" value="P:positive regulation of actin filament polymerization"/>
    <property type="evidence" value="ECO:0000250"/>
    <property type="project" value="UniProtKB"/>
</dbReference>
<dbReference type="GO" id="GO:0042104">
    <property type="term" value="P:positive regulation of activated T cell proliferation"/>
    <property type="evidence" value="ECO:0000250"/>
    <property type="project" value="UniProtKB"/>
</dbReference>
<dbReference type="GO" id="GO:0002588">
    <property type="term" value="P:positive regulation of antigen processing and presentation of peptide antigen via MHC class II"/>
    <property type="evidence" value="ECO:0000250"/>
    <property type="project" value="UniProtKB"/>
</dbReference>
<dbReference type="GO" id="GO:0032731">
    <property type="term" value="P:positive regulation of interleukin-1 beta production"/>
    <property type="evidence" value="ECO:0000250"/>
    <property type="project" value="HGNC-UCL"/>
</dbReference>
<dbReference type="GO" id="GO:0032755">
    <property type="term" value="P:positive regulation of interleukin-6 production"/>
    <property type="evidence" value="ECO:0000250"/>
    <property type="project" value="UniProtKB"/>
</dbReference>
<dbReference type="GO" id="GO:0050766">
    <property type="term" value="P:positive regulation of phagocytosis"/>
    <property type="evidence" value="ECO:0000250"/>
    <property type="project" value="UniProtKB"/>
</dbReference>
<dbReference type="GO" id="GO:2000406">
    <property type="term" value="P:positive regulation of T cell migration"/>
    <property type="evidence" value="ECO:0000250"/>
    <property type="project" value="UniProtKB"/>
</dbReference>
<dbReference type="GO" id="GO:0032729">
    <property type="term" value="P:positive regulation of type II interferon production"/>
    <property type="evidence" value="ECO:0000250"/>
    <property type="project" value="UniProtKB"/>
</dbReference>
<dbReference type="GO" id="GO:0051260">
    <property type="term" value="P:protein homooligomerization"/>
    <property type="evidence" value="ECO:0000250"/>
    <property type="project" value="UniProtKB"/>
</dbReference>
<dbReference type="GO" id="GO:0042981">
    <property type="term" value="P:regulation of apoptotic process"/>
    <property type="evidence" value="ECO:0007669"/>
    <property type="project" value="InterPro"/>
</dbReference>
<dbReference type="GO" id="GO:0031647">
    <property type="term" value="P:regulation of protein stability"/>
    <property type="evidence" value="ECO:0000250"/>
    <property type="project" value="UniProtKB"/>
</dbReference>
<dbReference type="CDD" id="cd08330">
    <property type="entry name" value="CARD_ASC_NALP1"/>
    <property type="match status" value="1"/>
</dbReference>
<dbReference type="CDD" id="cd08321">
    <property type="entry name" value="Pyrin_ASC-like"/>
    <property type="match status" value="1"/>
</dbReference>
<dbReference type="FunFam" id="1.10.533.10:FF:000013">
    <property type="entry name" value="Apoptosis-associated speck-like protein containing a CARD"/>
    <property type="match status" value="1"/>
</dbReference>
<dbReference type="FunFam" id="1.10.533.10:FF:000053">
    <property type="entry name" value="Apoptosis-associated speck-like protein containing a CARD"/>
    <property type="match status" value="1"/>
</dbReference>
<dbReference type="Gene3D" id="1.10.533.10">
    <property type="entry name" value="Death Domain, Fas"/>
    <property type="match status" value="2"/>
</dbReference>
<dbReference type="InterPro" id="IPR001315">
    <property type="entry name" value="CARD"/>
</dbReference>
<dbReference type="InterPro" id="IPR033516">
    <property type="entry name" value="CARD8/ASC/NALP1_CARD"/>
</dbReference>
<dbReference type="InterPro" id="IPR004020">
    <property type="entry name" value="DAPIN"/>
</dbReference>
<dbReference type="InterPro" id="IPR011029">
    <property type="entry name" value="DEATH-like_dom_sf"/>
</dbReference>
<dbReference type="InterPro" id="IPR051249">
    <property type="entry name" value="NLRP_Inflammasome"/>
</dbReference>
<dbReference type="PANTHER" id="PTHR46985:SF2">
    <property type="entry name" value="APOPTOSIS-ASSOCIATED SPECK-LIKE PROTEIN CONTAINING A CARD"/>
    <property type="match status" value="1"/>
</dbReference>
<dbReference type="PANTHER" id="PTHR46985">
    <property type="entry name" value="NACHT, LRR AND PYD DOMAINS-CONTAINING PROTEIN 1"/>
    <property type="match status" value="1"/>
</dbReference>
<dbReference type="Pfam" id="PF00619">
    <property type="entry name" value="CARD"/>
    <property type="match status" value="1"/>
</dbReference>
<dbReference type="Pfam" id="PF02758">
    <property type="entry name" value="PYRIN"/>
    <property type="match status" value="1"/>
</dbReference>
<dbReference type="SMART" id="SM01289">
    <property type="entry name" value="PYRIN"/>
    <property type="match status" value="1"/>
</dbReference>
<dbReference type="SUPFAM" id="SSF47986">
    <property type="entry name" value="DEATH domain"/>
    <property type="match status" value="2"/>
</dbReference>
<dbReference type="PROSITE" id="PS50209">
    <property type="entry name" value="CARD"/>
    <property type="match status" value="1"/>
</dbReference>
<dbReference type="PROSITE" id="PS50824">
    <property type="entry name" value="DAPIN"/>
    <property type="match status" value="1"/>
</dbReference>
<name>ASC_BOVIN</name>
<comment type="function">
    <text evidence="2">Functions as a key mediator in apoptosis and inflammation. Promotes caspase-mediated apoptosis involving predominantly caspase-8 and also caspase-9 in a probable cell type-specific manner. Involved in activation of the mitochondrial apoptotic pathway, promotes caspase-8-dependent proteolytic maturation of BID independently of FADD in certain cell types and also mediates mitochondrial translocation of BAX and activates BAX-dependent apoptosis coupled to activation of caspase-9, -2 and -3. Involved in innate immune response by acting as an integral adapter in the assembly of various inflammasomes (NLRP2, NLRP3, NLRP6 and AIM2) which recruit and activate caspase-1 leading to processing and secretion of pro-inflammatory cytokines. Caspase-1-dependent inflammation leads to macrophage pyroptosis, a form of cell death. The function as activating adapter in different types of inflammasomes is mediated by the pyrin and CARD domains and their homotypic interactions. Clustered PYCARD nucleates the formation of caspase-1 filaments through the interaction of their respective CARD domains, acting as a platform for of caspase-1 polymerization. In the NLRC4 inflammasomes seems not be required but facilitates the processing of procaspase-1. In cooperation with NOD2 involved in an inflammasome activated by bacterial muramyl dipeptide leading to caspase-1 activation. May be involved in RIGI-triggered pro-inflammatory responses and inflammasome activation. In collaboration with AIM2 which detects cytosolic double-stranded DNA may also be involved in a caspase-1-independent cell death that involves caspase-8. In adaptive immunity may be involved in maturation of dendritic cells to stimulate T-cell immunity and in cytoskeletal rearrangements coupled to chemotaxis and antigen uptake may be involved in post-transcriptional regulation of the guanine nucleotide exchange factor DOCK2; the latter function is proposed to involve the nuclear form. Also involved in transcriptional activation of cytokines and chemokines independent of the inflammasome; this function may involve AP-1, NF-kappa-B, MAPK and caspase-8 signaling pathways. For regulation of NF-kappa-B activating and inhibiting functions have been reported. Modulates NF-kappa-B induction at the level of the IKK complex by inhibiting kinase activity of CHUK and IKBK. Proposed to compete with RIPK2 for association with CASP1 thereby down-regulating CASP1-mediated RIPK2-dependent NF-kappa-B activation and activating interleukin-1 beta processing. Modulates host resistance to DNA virus infection, probably by inducing the cleavage of and inactivating CGAS in presence of cytoplasmic double-stranded DNA.</text>
</comment>
<comment type="subunit">
    <text evidence="1 2">Self-associates; enforced oligomerization induces apoptosis, NF-kappa-B regulation and interleukin-1 beta secretion. Homooligomers can form disk-like particles of approximately 12 nm diameter and approximately 1 nm height. Component of several inflammasomes containing one pattern recognition receptor/sensor, such as NLRP1, NLRP2, NLRP3, NLRP6, NLRC4, AIM2, MEFV or NOD2, and probably NLRC4 or NLRP12. Major component of the ASC pyroptosome, a 1-2 um supramolecular assembly (one per macrophage cell) which consists of oligomerized PYCARD dimers and CASP1. Interacts with CASP1 (precursor form); the interaction induces activation of CASP1 leading to the processing of interleukin-1 beta; PYCARD competes with RIPK2 for binding to CASP1. Interacts with NLRP3; the interaction requires the homooligomerization of NLRP3. Interacts with NLRP2, NLRC4, MEFV, CARD16, AIM2, NOD2, RIGI, RIPK2, PYDC1, PYDC2, NLRP10, CASP8, CHUK, IKBKB and BAX. Component of the AIM2 PANoptosome complex, a multiprotein complex that drives inflammatory cell death (PANoptosis).</text>
</comment>
<comment type="subcellular location">
    <subcellularLocation>
        <location evidence="2">Cytoplasm</location>
    </subcellularLocation>
    <subcellularLocation>
        <location evidence="2">Inflammasome</location>
    </subcellularLocation>
    <subcellularLocation>
        <location evidence="2">Endoplasmic reticulum</location>
    </subcellularLocation>
    <subcellularLocation>
        <location evidence="2">Mitochondrion</location>
    </subcellularLocation>
    <subcellularLocation>
        <location evidence="2">Nucleus</location>
    </subcellularLocation>
    <text evidence="1 2">Upstream of caspase activation, a redistribution from the cytoplasm to the aggregates occurs. These appear as hollow, perinuclear spherical, ball-like structures. Upon NLRP3 inflammasome activation redistributes to the perinuclear space localizing to endoplasmic reticulum and mitochondria. Localized primarily to the nucleus in resting monocytes/macrophages and rapidly redistributed to the cytoplasm upon pathogen infection (By similarity). Localized to large cytoplasmic aggregate appearing as a speck containing AIM2, PYCARD, CASP8 and bacterial DNA after infection with Francisella tularensis (By similarity).</text>
</comment>
<comment type="domain">
    <text evidence="2">The CARD domain mediates interaction with CASP1 and NLRC4.</text>
</comment>
<comment type="domain">
    <text evidence="2">The pyrin domain mediates homotypic interactions with pyrin domains of proteins such as of NLRP3, PYDC1, PYDC2 and AIM2.</text>
</comment>
<comment type="PTM">
    <text evidence="2">Phosphorylated.</text>
</comment>
<comment type="PTM">
    <text evidence="2">'Lys-63'-linked polyubiquitination by TRAF3 is critical for speck formation and inflammasome activation (By similarity). 'Lys-63'-linked deubiquitinated by USP50; a crucial step for NLRP3-mediated inflammasome activation (By similarity). 'Lys-63'-linked polyubiquitination by PELI1 is also critical for speck formation and inflammasome activation (By similarity). Deubiquitinated by USP3 that cleaves 'Lys-48'-linked ubiquitin chains and strengthens its stability by blocking proteasomal degradation (By similarity).</text>
</comment>